<evidence type="ECO:0000255" key="1">
    <source>
        <dbReference type="HAMAP-Rule" id="MF_01363"/>
    </source>
</evidence>
<evidence type="ECO:0000305" key="2"/>
<proteinExistence type="inferred from homology"/>
<reference key="1">
    <citation type="journal article" date="2007" name="J. Bacteriol.">
        <title>Whole-genome analysis of the methyl tert-butyl ether-degrading beta-proteobacterium Methylibium petroleiphilum PM1.</title>
        <authorList>
            <person name="Kane S.R."/>
            <person name="Chakicherla A.Y."/>
            <person name="Chain P.S.G."/>
            <person name="Schmidt R."/>
            <person name="Shin M.W."/>
            <person name="Legler T.C."/>
            <person name="Scow K.M."/>
            <person name="Larimer F.W."/>
            <person name="Lucas S.M."/>
            <person name="Richardson P.M."/>
            <person name="Hristova K.R."/>
        </authorList>
    </citation>
    <scope>NUCLEOTIDE SEQUENCE [LARGE SCALE GENOMIC DNA]</scope>
    <source>
        <strain>ATCC BAA-1232 / LMG 22953 / PM1</strain>
    </source>
</reference>
<accession>A2SD34</accession>
<name>RL21_METPP</name>
<gene>
    <name evidence="1" type="primary">rplU</name>
    <name type="ordered locus">Mpe_A0511</name>
</gene>
<organism>
    <name type="scientific">Methylibium petroleiphilum (strain ATCC BAA-1232 / LMG 22953 / PM1)</name>
    <dbReference type="NCBI Taxonomy" id="420662"/>
    <lineage>
        <taxon>Bacteria</taxon>
        <taxon>Pseudomonadati</taxon>
        <taxon>Pseudomonadota</taxon>
        <taxon>Betaproteobacteria</taxon>
        <taxon>Burkholderiales</taxon>
        <taxon>Sphaerotilaceae</taxon>
        <taxon>Methylibium</taxon>
    </lineage>
</organism>
<feature type="chain" id="PRO_1000067855" description="Large ribosomal subunit protein bL21">
    <location>
        <begin position="1"/>
        <end position="103"/>
    </location>
</feature>
<sequence>MYALIKTGGKQYKVAAGEKIKVEQIAADVGQEIVIDQVLAVGSGADLKVGTPLVAGATVKATVVAHGRHDKVRIFKMRRRKHYQKRQGHRQNFTELEISTVNG</sequence>
<dbReference type="EMBL" id="CP000555">
    <property type="protein sequence ID" value="ABM93473.1"/>
    <property type="molecule type" value="Genomic_DNA"/>
</dbReference>
<dbReference type="RefSeq" id="WP_011828111.1">
    <property type="nucleotide sequence ID" value="NC_008825.1"/>
</dbReference>
<dbReference type="SMR" id="A2SD34"/>
<dbReference type="STRING" id="420662.Mpe_A0511"/>
<dbReference type="KEGG" id="mpt:Mpe_A0511"/>
<dbReference type="eggNOG" id="COG0261">
    <property type="taxonomic scope" value="Bacteria"/>
</dbReference>
<dbReference type="HOGENOM" id="CLU_061463_3_2_4"/>
<dbReference type="Proteomes" id="UP000000366">
    <property type="component" value="Chromosome"/>
</dbReference>
<dbReference type="GO" id="GO:0005737">
    <property type="term" value="C:cytoplasm"/>
    <property type="evidence" value="ECO:0007669"/>
    <property type="project" value="UniProtKB-ARBA"/>
</dbReference>
<dbReference type="GO" id="GO:1990904">
    <property type="term" value="C:ribonucleoprotein complex"/>
    <property type="evidence" value="ECO:0007669"/>
    <property type="project" value="UniProtKB-KW"/>
</dbReference>
<dbReference type="GO" id="GO:0005840">
    <property type="term" value="C:ribosome"/>
    <property type="evidence" value="ECO:0007669"/>
    <property type="project" value="UniProtKB-KW"/>
</dbReference>
<dbReference type="GO" id="GO:0019843">
    <property type="term" value="F:rRNA binding"/>
    <property type="evidence" value="ECO:0007669"/>
    <property type="project" value="UniProtKB-UniRule"/>
</dbReference>
<dbReference type="GO" id="GO:0003735">
    <property type="term" value="F:structural constituent of ribosome"/>
    <property type="evidence" value="ECO:0007669"/>
    <property type="project" value="InterPro"/>
</dbReference>
<dbReference type="GO" id="GO:0006412">
    <property type="term" value="P:translation"/>
    <property type="evidence" value="ECO:0007669"/>
    <property type="project" value="UniProtKB-UniRule"/>
</dbReference>
<dbReference type="HAMAP" id="MF_01363">
    <property type="entry name" value="Ribosomal_bL21"/>
    <property type="match status" value="1"/>
</dbReference>
<dbReference type="InterPro" id="IPR028909">
    <property type="entry name" value="bL21-like"/>
</dbReference>
<dbReference type="InterPro" id="IPR036164">
    <property type="entry name" value="bL21-like_sf"/>
</dbReference>
<dbReference type="InterPro" id="IPR001787">
    <property type="entry name" value="Ribosomal_bL21"/>
</dbReference>
<dbReference type="InterPro" id="IPR018258">
    <property type="entry name" value="Ribosomal_bL21_CS"/>
</dbReference>
<dbReference type="NCBIfam" id="TIGR00061">
    <property type="entry name" value="L21"/>
    <property type="match status" value="1"/>
</dbReference>
<dbReference type="PANTHER" id="PTHR21349">
    <property type="entry name" value="50S RIBOSOMAL PROTEIN L21"/>
    <property type="match status" value="1"/>
</dbReference>
<dbReference type="PANTHER" id="PTHR21349:SF0">
    <property type="entry name" value="LARGE RIBOSOMAL SUBUNIT PROTEIN BL21M"/>
    <property type="match status" value="1"/>
</dbReference>
<dbReference type="Pfam" id="PF00829">
    <property type="entry name" value="Ribosomal_L21p"/>
    <property type="match status" value="1"/>
</dbReference>
<dbReference type="SUPFAM" id="SSF141091">
    <property type="entry name" value="L21p-like"/>
    <property type="match status" value="1"/>
</dbReference>
<dbReference type="PROSITE" id="PS01169">
    <property type="entry name" value="RIBOSOMAL_L21"/>
    <property type="match status" value="1"/>
</dbReference>
<keyword id="KW-1185">Reference proteome</keyword>
<keyword id="KW-0687">Ribonucleoprotein</keyword>
<keyword id="KW-0689">Ribosomal protein</keyword>
<keyword id="KW-0694">RNA-binding</keyword>
<keyword id="KW-0699">rRNA-binding</keyword>
<protein>
    <recommendedName>
        <fullName evidence="1">Large ribosomal subunit protein bL21</fullName>
    </recommendedName>
    <alternativeName>
        <fullName evidence="2">50S ribosomal protein L21</fullName>
    </alternativeName>
</protein>
<comment type="function">
    <text evidence="1">This protein binds to 23S rRNA in the presence of protein L20.</text>
</comment>
<comment type="subunit">
    <text evidence="1">Part of the 50S ribosomal subunit. Contacts protein L20.</text>
</comment>
<comment type="similarity">
    <text evidence="1">Belongs to the bacterial ribosomal protein bL21 family.</text>
</comment>